<name>RLMN_BRUSU</name>
<reference key="1">
    <citation type="journal article" date="2002" name="Proc. Natl. Acad. Sci. U.S.A.">
        <title>The Brucella suis genome reveals fundamental similarities between animal and plant pathogens and symbionts.</title>
        <authorList>
            <person name="Paulsen I.T."/>
            <person name="Seshadri R."/>
            <person name="Nelson K.E."/>
            <person name="Eisen J.A."/>
            <person name="Heidelberg J.F."/>
            <person name="Read T.D."/>
            <person name="Dodson R.J."/>
            <person name="Umayam L.A."/>
            <person name="Brinkac L.M."/>
            <person name="Beanan M.J."/>
            <person name="Daugherty S.C."/>
            <person name="DeBoy R.T."/>
            <person name="Durkin A.S."/>
            <person name="Kolonay J.F."/>
            <person name="Madupu R."/>
            <person name="Nelson W.C."/>
            <person name="Ayodeji B."/>
            <person name="Kraul M."/>
            <person name="Shetty J."/>
            <person name="Malek J.A."/>
            <person name="Van Aken S.E."/>
            <person name="Riedmuller S."/>
            <person name="Tettelin H."/>
            <person name="Gill S.R."/>
            <person name="White O."/>
            <person name="Salzberg S.L."/>
            <person name="Hoover D.L."/>
            <person name="Lindler L.E."/>
            <person name="Halling S.M."/>
            <person name="Boyle S.M."/>
            <person name="Fraser C.M."/>
        </authorList>
    </citation>
    <scope>NUCLEOTIDE SEQUENCE [LARGE SCALE GENOMIC DNA]</scope>
    <source>
        <strain>1330</strain>
    </source>
</reference>
<reference key="2">
    <citation type="journal article" date="2011" name="J. Bacteriol.">
        <title>Revised genome sequence of Brucella suis 1330.</title>
        <authorList>
            <person name="Tae H."/>
            <person name="Shallom S."/>
            <person name="Settlage R."/>
            <person name="Preston D."/>
            <person name="Adams L.G."/>
            <person name="Garner H.R."/>
        </authorList>
    </citation>
    <scope>NUCLEOTIDE SEQUENCE [LARGE SCALE GENOMIC DNA]</scope>
    <source>
        <strain>1330</strain>
    </source>
</reference>
<sequence>MSISFDLTIDDTRDQLARHARASLEAKPSLIGMSREEMAAALIAAGVPERQVKMRISQLWHWLYVRGVSDFADMRNISKDLRAMLAQHFTIARPEVVEEQISQDGTRKWLFRFPPRGAGRPVEIESVYIPEEGRGTLCISSQVGCTLTCSFCHTGTQKLVRNLTSEEILAQLLTARDRLGDFPDKDTPDGAMVPAEGRKITNIVMMGMGEPLYNFEEVKKALLIASDGDGPSLSKRRITLSTSGVVPEIYRTGDEIGVMLAISLHAVRDELRDILVPINKKYPLAELIKACREYPGLSNAKRITFEYVMLKDINDSLDDAKLLVKLLQGIPAKINLIPFNPWPGTNYQCSDWEQIEKFADYVNAAGYASPIRTPRGRDILAACGQLKSESERLRKSERLALEAMMIAGHGE</sequence>
<protein>
    <recommendedName>
        <fullName evidence="1">Dual-specificity RNA methyltransferase RlmN</fullName>
        <ecNumber evidence="1">2.1.1.192</ecNumber>
    </recommendedName>
    <alternativeName>
        <fullName evidence="1">23S rRNA (adenine(2503)-C(2))-methyltransferase</fullName>
    </alternativeName>
    <alternativeName>
        <fullName evidence="1">23S rRNA m2A2503 methyltransferase</fullName>
    </alternativeName>
    <alternativeName>
        <fullName evidence="1">Ribosomal RNA large subunit methyltransferase N</fullName>
    </alternativeName>
    <alternativeName>
        <fullName evidence="1">tRNA (adenine(37)-C(2))-methyltransferase</fullName>
    </alternativeName>
    <alternativeName>
        <fullName evidence="1">tRNA m2A37 methyltransferase</fullName>
    </alternativeName>
</protein>
<organism>
    <name type="scientific">Brucella suis biovar 1 (strain 1330)</name>
    <dbReference type="NCBI Taxonomy" id="204722"/>
    <lineage>
        <taxon>Bacteria</taxon>
        <taxon>Pseudomonadati</taxon>
        <taxon>Pseudomonadota</taxon>
        <taxon>Alphaproteobacteria</taxon>
        <taxon>Hyphomicrobiales</taxon>
        <taxon>Brucellaceae</taxon>
        <taxon>Brucella/Ochrobactrum group</taxon>
        <taxon>Brucella</taxon>
    </lineage>
</organism>
<proteinExistence type="inferred from homology"/>
<evidence type="ECO:0000255" key="1">
    <source>
        <dbReference type="HAMAP-Rule" id="MF_01849"/>
    </source>
</evidence>
<evidence type="ECO:0000255" key="2">
    <source>
        <dbReference type="PROSITE-ProRule" id="PRU01266"/>
    </source>
</evidence>
<keyword id="KW-0004">4Fe-4S</keyword>
<keyword id="KW-0963">Cytoplasm</keyword>
<keyword id="KW-1015">Disulfide bond</keyword>
<keyword id="KW-0408">Iron</keyword>
<keyword id="KW-0411">Iron-sulfur</keyword>
<keyword id="KW-0479">Metal-binding</keyword>
<keyword id="KW-0489">Methyltransferase</keyword>
<keyword id="KW-0698">rRNA processing</keyword>
<keyword id="KW-0949">S-adenosyl-L-methionine</keyword>
<keyword id="KW-0808">Transferase</keyword>
<keyword id="KW-0819">tRNA processing</keyword>
<dbReference type="EC" id="2.1.1.192" evidence="1"/>
<dbReference type="EMBL" id="AE014291">
    <property type="protein sequence ID" value="AAN29033.1"/>
    <property type="molecule type" value="Genomic_DNA"/>
</dbReference>
<dbReference type="EMBL" id="CP002997">
    <property type="protein sequence ID" value="AEM17445.1"/>
    <property type="molecule type" value="Genomic_DNA"/>
</dbReference>
<dbReference type="RefSeq" id="WP_006191146.1">
    <property type="nucleotide sequence ID" value="NZ_KN046804.1"/>
</dbReference>
<dbReference type="SMR" id="Q8G374"/>
<dbReference type="GeneID" id="45051230"/>
<dbReference type="KEGG" id="bms:BR0077"/>
<dbReference type="KEGG" id="bsi:BS1330_I0077"/>
<dbReference type="PATRIC" id="fig|204722.21.peg.3178"/>
<dbReference type="HOGENOM" id="CLU_029101_2_0_5"/>
<dbReference type="PhylomeDB" id="Q8G374"/>
<dbReference type="Proteomes" id="UP000007104">
    <property type="component" value="Chromosome I"/>
</dbReference>
<dbReference type="GO" id="GO:0005737">
    <property type="term" value="C:cytoplasm"/>
    <property type="evidence" value="ECO:0007669"/>
    <property type="project" value="UniProtKB-SubCell"/>
</dbReference>
<dbReference type="GO" id="GO:0051539">
    <property type="term" value="F:4 iron, 4 sulfur cluster binding"/>
    <property type="evidence" value="ECO:0007669"/>
    <property type="project" value="UniProtKB-UniRule"/>
</dbReference>
<dbReference type="GO" id="GO:0046872">
    <property type="term" value="F:metal ion binding"/>
    <property type="evidence" value="ECO:0007669"/>
    <property type="project" value="UniProtKB-KW"/>
</dbReference>
<dbReference type="GO" id="GO:0070040">
    <property type="term" value="F:rRNA (adenine(2503)-C2-)-methyltransferase activity"/>
    <property type="evidence" value="ECO:0007669"/>
    <property type="project" value="UniProtKB-UniRule"/>
</dbReference>
<dbReference type="GO" id="GO:0019843">
    <property type="term" value="F:rRNA binding"/>
    <property type="evidence" value="ECO:0007669"/>
    <property type="project" value="UniProtKB-UniRule"/>
</dbReference>
<dbReference type="GO" id="GO:0002935">
    <property type="term" value="F:tRNA (adenine(37)-C2)-methyltransferase activity"/>
    <property type="evidence" value="ECO:0007669"/>
    <property type="project" value="UniProtKB-UniRule"/>
</dbReference>
<dbReference type="GO" id="GO:0000049">
    <property type="term" value="F:tRNA binding"/>
    <property type="evidence" value="ECO:0007669"/>
    <property type="project" value="UniProtKB-UniRule"/>
</dbReference>
<dbReference type="GO" id="GO:0070475">
    <property type="term" value="P:rRNA base methylation"/>
    <property type="evidence" value="ECO:0007669"/>
    <property type="project" value="UniProtKB-UniRule"/>
</dbReference>
<dbReference type="GO" id="GO:0030488">
    <property type="term" value="P:tRNA methylation"/>
    <property type="evidence" value="ECO:0007669"/>
    <property type="project" value="UniProtKB-UniRule"/>
</dbReference>
<dbReference type="CDD" id="cd01335">
    <property type="entry name" value="Radical_SAM"/>
    <property type="match status" value="1"/>
</dbReference>
<dbReference type="FunFam" id="3.20.20.70:FF:000008">
    <property type="entry name" value="Dual-specificity RNA methyltransferase RlmN"/>
    <property type="match status" value="1"/>
</dbReference>
<dbReference type="Gene3D" id="1.10.150.530">
    <property type="match status" value="1"/>
</dbReference>
<dbReference type="Gene3D" id="3.20.20.70">
    <property type="entry name" value="Aldolase class I"/>
    <property type="match status" value="1"/>
</dbReference>
<dbReference type="HAMAP" id="MF_01849">
    <property type="entry name" value="RNA_methyltr_RlmN"/>
    <property type="match status" value="1"/>
</dbReference>
<dbReference type="InterPro" id="IPR013785">
    <property type="entry name" value="Aldolase_TIM"/>
</dbReference>
<dbReference type="InterPro" id="IPR040072">
    <property type="entry name" value="Methyltransferase_A"/>
</dbReference>
<dbReference type="InterPro" id="IPR048641">
    <property type="entry name" value="RlmN_N"/>
</dbReference>
<dbReference type="InterPro" id="IPR027492">
    <property type="entry name" value="RNA_MTrfase_RlmN"/>
</dbReference>
<dbReference type="InterPro" id="IPR004383">
    <property type="entry name" value="rRNA_lsu_MTrfase_RlmN/Cfr"/>
</dbReference>
<dbReference type="InterPro" id="IPR007197">
    <property type="entry name" value="rSAM"/>
</dbReference>
<dbReference type="NCBIfam" id="TIGR00048">
    <property type="entry name" value="rRNA_mod_RlmN"/>
    <property type="match status" value="1"/>
</dbReference>
<dbReference type="PANTHER" id="PTHR30544">
    <property type="entry name" value="23S RRNA METHYLTRANSFERASE"/>
    <property type="match status" value="1"/>
</dbReference>
<dbReference type="PANTHER" id="PTHR30544:SF5">
    <property type="entry name" value="RADICAL SAM CORE DOMAIN-CONTAINING PROTEIN"/>
    <property type="match status" value="1"/>
</dbReference>
<dbReference type="Pfam" id="PF04055">
    <property type="entry name" value="Radical_SAM"/>
    <property type="match status" value="1"/>
</dbReference>
<dbReference type="Pfam" id="PF21016">
    <property type="entry name" value="RlmN_N"/>
    <property type="match status" value="1"/>
</dbReference>
<dbReference type="PIRSF" id="PIRSF006004">
    <property type="entry name" value="CHP00048"/>
    <property type="match status" value="1"/>
</dbReference>
<dbReference type="SFLD" id="SFLDF00275">
    <property type="entry name" value="adenosine_C2_methyltransferase"/>
    <property type="match status" value="1"/>
</dbReference>
<dbReference type="SFLD" id="SFLDG01062">
    <property type="entry name" value="methyltransferase_(Class_A)"/>
    <property type="match status" value="1"/>
</dbReference>
<dbReference type="SUPFAM" id="SSF102114">
    <property type="entry name" value="Radical SAM enzymes"/>
    <property type="match status" value="1"/>
</dbReference>
<dbReference type="PROSITE" id="PS51918">
    <property type="entry name" value="RADICAL_SAM"/>
    <property type="match status" value="1"/>
</dbReference>
<comment type="function">
    <text evidence="1">Specifically methylates position 2 of adenine 2503 in 23S rRNA and position 2 of adenine 37 in tRNAs. m2A2503 modification seems to play a crucial role in the proofreading step occurring at the peptidyl transferase center and thus would serve to optimize ribosomal fidelity.</text>
</comment>
<comment type="catalytic activity">
    <reaction evidence="1">
        <text>adenosine(2503) in 23S rRNA + 2 reduced [2Fe-2S]-[ferredoxin] + 2 S-adenosyl-L-methionine = 2-methyladenosine(2503) in 23S rRNA + 5'-deoxyadenosine + L-methionine + 2 oxidized [2Fe-2S]-[ferredoxin] + S-adenosyl-L-homocysteine</text>
        <dbReference type="Rhea" id="RHEA:42916"/>
        <dbReference type="Rhea" id="RHEA-COMP:10000"/>
        <dbReference type="Rhea" id="RHEA-COMP:10001"/>
        <dbReference type="Rhea" id="RHEA-COMP:10152"/>
        <dbReference type="Rhea" id="RHEA-COMP:10282"/>
        <dbReference type="ChEBI" id="CHEBI:17319"/>
        <dbReference type="ChEBI" id="CHEBI:33737"/>
        <dbReference type="ChEBI" id="CHEBI:33738"/>
        <dbReference type="ChEBI" id="CHEBI:57844"/>
        <dbReference type="ChEBI" id="CHEBI:57856"/>
        <dbReference type="ChEBI" id="CHEBI:59789"/>
        <dbReference type="ChEBI" id="CHEBI:74411"/>
        <dbReference type="ChEBI" id="CHEBI:74497"/>
        <dbReference type="EC" id="2.1.1.192"/>
    </reaction>
</comment>
<comment type="catalytic activity">
    <reaction evidence="1">
        <text>adenosine(37) in tRNA + 2 reduced [2Fe-2S]-[ferredoxin] + 2 S-adenosyl-L-methionine = 2-methyladenosine(37) in tRNA + 5'-deoxyadenosine + L-methionine + 2 oxidized [2Fe-2S]-[ferredoxin] + S-adenosyl-L-homocysteine</text>
        <dbReference type="Rhea" id="RHEA:43332"/>
        <dbReference type="Rhea" id="RHEA-COMP:10000"/>
        <dbReference type="Rhea" id="RHEA-COMP:10001"/>
        <dbReference type="Rhea" id="RHEA-COMP:10162"/>
        <dbReference type="Rhea" id="RHEA-COMP:10485"/>
        <dbReference type="ChEBI" id="CHEBI:17319"/>
        <dbReference type="ChEBI" id="CHEBI:33737"/>
        <dbReference type="ChEBI" id="CHEBI:33738"/>
        <dbReference type="ChEBI" id="CHEBI:57844"/>
        <dbReference type="ChEBI" id="CHEBI:57856"/>
        <dbReference type="ChEBI" id="CHEBI:59789"/>
        <dbReference type="ChEBI" id="CHEBI:74411"/>
        <dbReference type="ChEBI" id="CHEBI:74497"/>
        <dbReference type="EC" id="2.1.1.192"/>
    </reaction>
</comment>
<comment type="cofactor">
    <cofactor evidence="1">
        <name>[4Fe-4S] cluster</name>
        <dbReference type="ChEBI" id="CHEBI:49883"/>
    </cofactor>
    <text evidence="1">Binds 1 [4Fe-4S] cluster. The cluster is coordinated with 3 cysteines and an exchangeable S-adenosyl-L-methionine.</text>
</comment>
<comment type="subcellular location">
    <subcellularLocation>
        <location evidence="1">Cytoplasm</location>
    </subcellularLocation>
</comment>
<comment type="miscellaneous">
    <text evidence="1">Reaction proceeds by a ping-pong mechanism involving intermediate methylation of a conserved cysteine residue.</text>
</comment>
<comment type="similarity">
    <text evidence="1">Belongs to the radical SAM superfamily. RlmN family.</text>
</comment>
<gene>
    <name evidence="1" type="primary">rlmN</name>
    <name type="ordered locus">BR0077</name>
    <name type="ordered locus">BS1330_I0077</name>
</gene>
<feature type="chain" id="PRO_0000350067" description="Dual-specificity RNA methyltransferase RlmN">
    <location>
        <begin position="1"/>
        <end position="411"/>
    </location>
</feature>
<feature type="domain" description="Radical SAM core" evidence="2">
    <location>
        <begin position="131"/>
        <end position="380"/>
    </location>
</feature>
<feature type="active site" description="Proton acceptor" evidence="1">
    <location>
        <position position="125"/>
    </location>
</feature>
<feature type="active site" description="S-methylcysteine intermediate" evidence="1">
    <location>
        <position position="383"/>
    </location>
</feature>
<feature type="binding site" evidence="1">
    <location>
        <position position="145"/>
    </location>
    <ligand>
        <name>[4Fe-4S] cluster</name>
        <dbReference type="ChEBI" id="CHEBI:49883"/>
        <note>4Fe-4S-S-AdoMet</note>
    </ligand>
</feature>
<feature type="binding site" evidence="1">
    <location>
        <position position="149"/>
    </location>
    <ligand>
        <name>[4Fe-4S] cluster</name>
        <dbReference type="ChEBI" id="CHEBI:49883"/>
        <note>4Fe-4S-S-AdoMet</note>
    </ligand>
</feature>
<feature type="binding site" evidence="1">
    <location>
        <position position="152"/>
    </location>
    <ligand>
        <name>[4Fe-4S] cluster</name>
        <dbReference type="ChEBI" id="CHEBI:49883"/>
        <note>4Fe-4S-S-AdoMet</note>
    </ligand>
</feature>
<feature type="binding site" evidence="1">
    <location>
        <begin position="209"/>
        <end position="210"/>
    </location>
    <ligand>
        <name>S-adenosyl-L-methionine</name>
        <dbReference type="ChEBI" id="CHEBI:59789"/>
    </ligand>
</feature>
<feature type="binding site" evidence="1">
    <location>
        <position position="241"/>
    </location>
    <ligand>
        <name>S-adenosyl-L-methionine</name>
        <dbReference type="ChEBI" id="CHEBI:59789"/>
    </ligand>
</feature>
<feature type="binding site" evidence="1">
    <location>
        <begin position="263"/>
        <end position="265"/>
    </location>
    <ligand>
        <name>S-adenosyl-L-methionine</name>
        <dbReference type="ChEBI" id="CHEBI:59789"/>
    </ligand>
</feature>
<feature type="binding site" evidence="1">
    <location>
        <position position="340"/>
    </location>
    <ligand>
        <name>S-adenosyl-L-methionine</name>
        <dbReference type="ChEBI" id="CHEBI:59789"/>
    </ligand>
</feature>
<feature type="disulfide bond" description="(transient)" evidence="1">
    <location>
        <begin position="138"/>
        <end position="383"/>
    </location>
</feature>
<accession>Q8G374</accession>
<accession>G0KAX4</accession>